<keyword id="KW-0328">Glycosyltransferase</keyword>
<keyword id="KW-0460">Magnesium</keyword>
<keyword id="KW-0665">Pyrimidine biosynthesis</keyword>
<keyword id="KW-0808">Transferase</keyword>
<accession>B3Q0A6</accession>
<name>PYRE_RHIE6</name>
<evidence type="ECO:0000255" key="1">
    <source>
        <dbReference type="HAMAP-Rule" id="MF_01208"/>
    </source>
</evidence>
<proteinExistence type="inferred from homology"/>
<sequence>MIQTTFPDRAVMAELVAKMLWEIKAVHFNAGEPYKLSSGMASPVYIDCRKLLSYPRIRSTVMDFAASTLMRDAGFEQFDCIAGGETAGIPFAALLADRLGLPMIYVRKQPKGHGRNAQIEGNMPEGSRVLVIEDLTTAGGSMFKFIDAVRAAGGIVDHGIALFFYDIFGQQRFTDGKVRLHHIATWRNVLAVAKAQQLFDDKTLAEVEAFLDAPLAWSGRNGGVCELSL</sequence>
<gene>
    <name evidence="1" type="primary">pyrE</name>
    <name type="ordered locus">RHECIAT_CH0000545</name>
</gene>
<feature type="chain" id="PRO_1000138821" description="Orotate phosphoribosyltransferase">
    <location>
        <begin position="1"/>
        <end position="229"/>
    </location>
</feature>
<feature type="binding site" evidence="1">
    <location>
        <position position="107"/>
    </location>
    <ligand>
        <name>5-phospho-alpha-D-ribose 1-diphosphate</name>
        <dbReference type="ChEBI" id="CHEBI:58017"/>
        <note>ligand shared between dimeric partners</note>
    </ligand>
</feature>
<feature type="binding site" description="in other chain" evidence="1">
    <location>
        <position position="108"/>
    </location>
    <ligand>
        <name>5-phospho-alpha-D-ribose 1-diphosphate</name>
        <dbReference type="ChEBI" id="CHEBI:58017"/>
        <note>ligand shared between dimeric partners</note>
    </ligand>
</feature>
<feature type="binding site" evidence="1">
    <location>
        <position position="111"/>
    </location>
    <ligand>
        <name>5-phospho-alpha-D-ribose 1-diphosphate</name>
        <dbReference type="ChEBI" id="CHEBI:58017"/>
        <note>ligand shared between dimeric partners</note>
    </ligand>
</feature>
<feature type="binding site" evidence="1">
    <location>
        <position position="113"/>
    </location>
    <ligand>
        <name>5-phospho-alpha-D-ribose 1-diphosphate</name>
        <dbReference type="ChEBI" id="CHEBI:58017"/>
        <note>ligand shared between dimeric partners</note>
    </ligand>
</feature>
<feature type="binding site" description="in other chain" evidence="1">
    <location>
        <begin position="133"/>
        <end position="141"/>
    </location>
    <ligand>
        <name>5-phospho-alpha-D-ribose 1-diphosphate</name>
        <dbReference type="ChEBI" id="CHEBI:58017"/>
        <note>ligand shared between dimeric partners</note>
    </ligand>
</feature>
<feature type="binding site" evidence="1">
    <location>
        <position position="137"/>
    </location>
    <ligand>
        <name>orotate</name>
        <dbReference type="ChEBI" id="CHEBI:30839"/>
    </ligand>
</feature>
<reference key="1">
    <citation type="journal article" date="2010" name="Appl. Environ. Microbiol.">
        <title>Conserved symbiotic plasmid DNA sequences in the multireplicon pangenomic structure of Rhizobium etli.</title>
        <authorList>
            <person name="Gonzalez V."/>
            <person name="Acosta J.L."/>
            <person name="Santamaria R.I."/>
            <person name="Bustos P."/>
            <person name="Fernandez J.L."/>
            <person name="Hernandez Gonzalez I.L."/>
            <person name="Diaz R."/>
            <person name="Flores M."/>
            <person name="Palacios R."/>
            <person name="Mora J."/>
            <person name="Davila G."/>
        </authorList>
    </citation>
    <scope>NUCLEOTIDE SEQUENCE [LARGE SCALE GENOMIC DNA]</scope>
    <source>
        <strain>CIAT 652</strain>
    </source>
</reference>
<organism>
    <name type="scientific">Rhizobium etli (strain CIAT 652)</name>
    <dbReference type="NCBI Taxonomy" id="491916"/>
    <lineage>
        <taxon>Bacteria</taxon>
        <taxon>Pseudomonadati</taxon>
        <taxon>Pseudomonadota</taxon>
        <taxon>Alphaproteobacteria</taxon>
        <taxon>Hyphomicrobiales</taxon>
        <taxon>Rhizobiaceae</taxon>
        <taxon>Rhizobium/Agrobacterium group</taxon>
        <taxon>Rhizobium</taxon>
    </lineage>
</organism>
<comment type="function">
    <text evidence="1">Catalyzes the transfer of a ribosyl phosphate group from 5-phosphoribose 1-diphosphate to orotate, leading to the formation of orotidine monophosphate (OMP).</text>
</comment>
<comment type="catalytic activity">
    <reaction evidence="1">
        <text>orotidine 5'-phosphate + diphosphate = orotate + 5-phospho-alpha-D-ribose 1-diphosphate</text>
        <dbReference type="Rhea" id="RHEA:10380"/>
        <dbReference type="ChEBI" id="CHEBI:30839"/>
        <dbReference type="ChEBI" id="CHEBI:33019"/>
        <dbReference type="ChEBI" id="CHEBI:57538"/>
        <dbReference type="ChEBI" id="CHEBI:58017"/>
        <dbReference type="EC" id="2.4.2.10"/>
    </reaction>
</comment>
<comment type="cofactor">
    <cofactor evidence="1">
        <name>Mg(2+)</name>
        <dbReference type="ChEBI" id="CHEBI:18420"/>
    </cofactor>
</comment>
<comment type="pathway">
    <text evidence="1">Pyrimidine metabolism; UMP biosynthesis via de novo pathway; UMP from orotate: step 1/2.</text>
</comment>
<comment type="subunit">
    <text evidence="1">Homodimer.</text>
</comment>
<comment type="similarity">
    <text evidence="1">Belongs to the purine/pyrimidine phosphoribosyltransferase family. PyrE subfamily.</text>
</comment>
<protein>
    <recommendedName>
        <fullName evidence="1">Orotate phosphoribosyltransferase</fullName>
        <shortName evidence="1">OPRT</shortName>
        <shortName evidence="1">OPRTase</shortName>
        <ecNumber evidence="1">2.4.2.10</ecNumber>
    </recommendedName>
</protein>
<dbReference type="EC" id="2.4.2.10" evidence="1"/>
<dbReference type="EMBL" id="CP001074">
    <property type="protein sequence ID" value="ACE89538.1"/>
    <property type="molecule type" value="Genomic_DNA"/>
</dbReference>
<dbReference type="SMR" id="B3Q0A6"/>
<dbReference type="KEGG" id="rec:RHECIAT_CH0000545"/>
<dbReference type="eggNOG" id="COG0461">
    <property type="taxonomic scope" value="Bacteria"/>
</dbReference>
<dbReference type="HOGENOM" id="CLU_074878_1_0_5"/>
<dbReference type="UniPathway" id="UPA00070">
    <property type="reaction ID" value="UER00119"/>
</dbReference>
<dbReference type="Proteomes" id="UP000008817">
    <property type="component" value="Chromosome"/>
</dbReference>
<dbReference type="GO" id="GO:0000287">
    <property type="term" value="F:magnesium ion binding"/>
    <property type="evidence" value="ECO:0007669"/>
    <property type="project" value="UniProtKB-UniRule"/>
</dbReference>
<dbReference type="GO" id="GO:0004588">
    <property type="term" value="F:orotate phosphoribosyltransferase activity"/>
    <property type="evidence" value="ECO:0007669"/>
    <property type="project" value="UniProtKB-UniRule"/>
</dbReference>
<dbReference type="GO" id="GO:0044205">
    <property type="term" value="P:'de novo' UMP biosynthetic process"/>
    <property type="evidence" value="ECO:0007669"/>
    <property type="project" value="UniProtKB-UniRule"/>
</dbReference>
<dbReference type="GO" id="GO:0019856">
    <property type="term" value="P:pyrimidine nucleobase biosynthetic process"/>
    <property type="evidence" value="ECO:0007669"/>
    <property type="project" value="TreeGrafter"/>
</dbReference>
<dbReference type="CDD" id="cd06223">
    <property type="entry name" value="PRTases_typeI"/>
    <property type="match status" value="1"/>
</dbReference>
<dbReference type="Gene3D" id="3.40.50.2020">
    <property type="match status" value="1"/>
</dbReference>
<dbReference type="HAMAP" id="MF_01208">
    <property type="entry name" value="PyrE"/>
    <property type="match status" value="1"/>
</dbReference>
<dbReference type="InterPro" id="IPR023031">
    <property type="entry name" value="OPRT"/>
</dbReference>
<dbReference type="InterPro" id="IPR004467">
    <property type="entry name" value="Or_phspho_trans_dom"/>
</dbReference>
<dbReference type="InterPro" id="IPR000836">
    <property type="entry name" value="PRibTrfase_dom"/>
</dbReference>
<dbReference type="InterPro" id="IPR029057">
    <property type="entry name" value="PRTase-like"/>
</dbReference>
<dbReference type="NCBIfam" id="NF001729">
    <property type="entry name" value="PRK00455.1-3"/>
    <property type="match status" value="1"/>
</dbReference>
<dbReference type="NCBIfam" id="TIGR00336">
    <property type="entry name" value="pyrE"/>
    <property type="match status" value="1"/>
</dbReference>
<dbReference type="PANTHER" id="PTHR19278">
    <property type="entry name" value="OROTATE PHOSPHORIBOSYLTRANSFERASE"/>
    <property type="match status" value="1"/>
</dbReference>
<dbReference type="PANTHER" id="PTHR19278:SF9">
    <property type="entry name" value="URIDINE 5'-MONOPHOSPHATE SYNTHASE"/>
    <property type="match status" value="1"/>
</dbReference>
<dbReference type="Pfam" id="PF00156">
    <property type="entry name" value="Pribosyltran"/>
    <property type="match status" value="1"/>
</dbReference>
<dbReference type="SUPFAM" id="SSF53271">
    <property type="entry name" value="PRTase-like"/>
    <property type="match status" value="1"/>
</dbReference>